<feature type="chain" id="PRO_0000173376" description="Multi-drug resistance efflux pump PmrA homolog">
    <location>
        <begin position="1" status="less than"/>
        <end position="119"/>
    </location>
</feature>
<feature type="transmembrane region" description="Helical" evidence="1">
    <location>
        <begin position="1" status="less than"/>
        <end position="20"/>
    </location>
</feature>
<feature type="transmembrane region" description="Helical" evidence="1">
    <location>
        <begin position="22"/>
        <end position="42"/>
    </location>
</feature>
<feature type="transmembrane region" description="Helical" evidence="1">
    <location>
        <begin position="64"/>
        <end position="84"/>
    </location>
</feature>
<feature type="transmembrane region" description="Helical" evidence="1">
    <location>
        <begin position="88"/>
        <end position="108"/>
    </location>
</feature>
<feature type="non-terminal residue">
    <location>
        <position position="1"/>
    </location>
</feature>
<dbReference type="EMBL" id="X62621">
    <property type="protein sequence ID" value="CAA44488.1"/>
    <property type="molecule type" value="Genomic_DNA"/>
</dbReference>
<dbReference type="PIR" id="PC1133">
    <property type="entry name" value="PC1133"/>
</dbReference>
<dbReference type="SMR" id="P27173"/>
<dbReference type="GO" id="GO:0005886">
    <property type="term" value="C:plasma membrane"/>
    <property type="evidence" value="ECO:0007669"/>
    <property type="project" value="UniProtKB-SubCell"/>
</dbReference>
<dbReference type="GO" id="GO:0022857">
    <property type="term" value="F:transmembrane transporter activity"/>
    <property type="evidence" value="ECO:0007669"/>
    <property type="project" value="InterPro"/>
</dbReference>
<dbReference type="Gene3D" id="1.20.1250.20">
    <property type="entry name" value="MFS general substrate transporter like domains"/>
    <property type="match status" value="1"/>
</dbReference>
<dbReference type="InterPro" id="IPR011701">
    <property type="entry name" value="MFS"/>
</dbReference>
<dbReference type="InterPro" id="IPR020846">
    <property type="entry name" value="MFS_dom"/>
</dbReference>
<dbReference type="InterPro" id="IPR050497">
    <property type="entry name" value="MFS_MdtG_subfamily"/>
</dbReference>
<dbReference type="InterPro" id="IPR036259">
    <property type="entry name" value="MFS_trans_sf"/>
</dbReference>
<dbReference type="PANTHER" id="PTHR43414">
    <property type="entry name" value="MULTIDRUG RESISTANCE PROTEIN MDTG"/>
    <property type="match status" value="1"/>
</dbReference>
<dbReference type="PANTHER" id="PTHR43414:SF6">
    <property type="entry name" value="MULTIDRUG RESISTANCE PROTEIN MDTG"/>
    <property type="match status" value="1"/>
</dbReference>
<dbReference type="Pfam" id="PF07690">
    <property type="entry name" value="MFS_1"/>
    <property type="match status" value="1"/>
</dbReference>
<dbReference type="SUPFAM" id="SSF103473">
    <property type="entry name" value="MFS general substrate transporter"/>
    <property type="match status" value="1"/>
</dbReference>
<dbReference type="PROSITE" id="PS50850">
    <property type="entry name" value="MFS"/>
    <property type="match status" value="1"/>
</dbReference>
<accession>P27173</accession>
<comment type="subcellular location">
    <subcellularLocation>
        <location evidence="2">Cell membrane</location>
        <topology evidence="2">Multi-pass membrane protein</topology>
    </subcellularLocation>
</comment>
<comment type="similarity">
    <text evidence="2">Belongs to the major facilitator superfamily.</text>
</comment>
<gene>
    <name type="primary">pmrA</name>
</gene>
<protein>
    <recommendedName>
        <fullName>Multi-drug resistance efflux pump PmrA homolog</fullName>
    </recommendedName>
</protein>
<organism>
    <name type="scientific">Lactococcus lactis subsp. cremoris</name>
    <name type="common">Streptococcus cremoris</name>
    <dbReference type="NCBI Taxonomy" id="1359"/>
    <lineage>
        <taxon>Bacteria</taxon>
        <taxon>Bacillati</taxon>
        <taxon>Bacillota</taxon>
        <taxon>Bacilli</taxon>
        <taxon>Lactobacillales</taxon>
        <taxon>Streptococcaceae</taxon>
        <taxon>Lactococcus</taxon>
    </lineage>
</organism>
<sequence>ILIGLVFTFVIYLPMAFVQSPLQLGILRFLLGFGAGALMPSVNSLLSKITPKEGVSRIFAYAQMCSNLGMVTGPLVGSAIAGYISYRAAIVGTSLFVIVNIIWSFINFRKYLRKRSIME</sequence>
<evidence type="ECO:0000255" key="1"/>
<evidence type="ECO:0000305" key="2"/>
<proteinExistence type="inferred from homology"/>
<reference key="1">
    <citation type="journal article" date="1992" name="Gene">
        <title>Sequence encoding ribosomal protein L33 of Lactococcus lactis.</title>
        <authorList>
            <person name="Koivula T."/>
            <person name="Hemilae H."/>
        </authorList>
    </citation>
    <scope>NUCLEOTIDE SEQUENCE [GENOMIC DNA]</scope>
    <source>
        <strain>MG1614</strain>
    </source>
</reference>
<name>PMRA_LACLC</name>
<keyword id="KW-1003">Cell membrane</keyword>
<keyword id="KW-0472">Membrane</keyword>
<keyword id="KW-0812">Transmembrane</keyword>
<keyword id="KW-1133">Transmembrane helix</keyword>
<keyword id="KW-0813">Transport</keyword>